<proteinExistence type="inferred from homology"/>
<keyword id="KW-0285">Flavoprotein</keyword>
<keyword id="KW-0288">FMN</keyword>
<keyword id="KW-0520">NAD</keyword>
<keyword id="KW-0521">NADP</keyword>
<keyword id="KW-0547">Nucleotide-binding</keyword>
<keyword id="KW-0560">Oxidoreductase</keyword>
<feature type="initiator methionine" description="Removed" evidence="1">
    <location>
        <position position="1"/>
    </location>
</feature>
<feature type="chain" id="PRO_0000200755" description="NAD(P)H dehydrogenase (quinone)">
    <location>
        <begin position="2"/>
        <end position="198"/>
    </location>
</feature>
<feature type="domain" description="Flavodoxin-like" evidence="2">
    <location>
        <begin position="4"/>
        <end position="189"/>
    </location>
</feature>
<feature type="binding site" evidence="2">
    <location>
        <begin position="10"/>
        <end position="15"/>
    </location>
    <ligand>
        <name>FMN</name>
        <dbReference type="ChEBI" id="CHEBI:58210"/>
    </ligand>
</feature>
<feature type="binding site" evidence="2">
    <location>
        <position position="12"/>
    </location>
    <ligand>
        <name>NAD(+)</name>
        <dbReference type="ChEBI" id="CHEBI:57540"/>
    </ligand>
</feature>
<feature type="binding site" evidence="2">
    <location>
        <begin position="78"/>
        <end position="80"/>
    </location>
    <ligand>
        <name>FMN</name>
        <dbReference type="ChEBI" id="CHEBI:58210"/>
    </ligand>
</feature>
<feature type="binding site" evidence="2">
    <location>
        <position position="98"/>
    </location>
    <ligand>
        <name>substrate</name>
    </ligand>
</feature>
<feature type="binding site" evidence="2">
    <location>
        <begin position="113"/>
        <end position="118"/>
    </location>
    <ligand>
        <name>FMN</name>
        <dbReference type="ChEBI" id="CHEBI:58210"/>
    </ligand>
</feature>
<feature type="binding site" evidence="2">
    <location>
        <position position="133"/>
    </location>
    <ligand>
        <name>FMN</name>
        <dbReference type="ChEBI" id="CHEBI:58210"/>
    </ligand>
</feature>
<protein>
    <recommendedName>
        <fullName evidence="2">NAD(P)H dehydrogenase (quinone)</fullName>
        <ecNumber evidence="2">1.6.5.2</ecNumber>
    </recommendedName>
    <alternativeName>
        <fullName>Flavoprotein WrbA</fullName>
    </alternativeName>
    <alternativeName>
        <fullName evidence="2">NAD(P)H:quinone oxidoreductase</fullName>
        <shortName evidence="2">NQO</shortName>
    </alternativeName>
</protein>
<name>NQOR_SALPA</name>
<reference key="1">
    <citation type="journal article" date="2004" name="Nat. Genet.">
        <title>Comparison of genome degradation in Paratyphi A and Typhi, human-restricted serovars of Salmonella enterica that cause typhoid.</title>
        <authorList>
            <person name="McClelland M."/>
            <person name="Sanderson K.E."/>
            <person name="Clifton S.W."/>
            <person name="Latreille P."/>
            <person name="Porwollik S."/>
            <person name="Sabo A."/>
            <person name="Meyer R."/>
            <person name="Bieri T."/>
            <person name="Ozersky P."/>
            <person name="McLellan M."/>
            <person name="Harkins C.R."/>
            <person name="Wang C."/>
            <person name="Nguyen C."/>
            <person name="Berghoff A."/>
            <person name="Elliott G."/>
            <person name="Kohlberg S."/>
            <person name="Strong C."/>
            <person name="Du F."/>
            <person name="Carter J."/>
            <person name="Kremizki C."/>
            <person name="Layman D."/>
            <person name="Leonard S."/>
            <person name="Sun H."/>
            <person name="Fulton L."/>
            <person name="Nash W."/>
            <person name="Miner T."/>
            <person name="Minx P."/>
            <person name="Delehaunty K."/>
            <person name="Fronick C."/>
            <person name="Magrini V."/>
            <person name="Nhan M."/>
            <person name="Warren W."/>
            <person name="Florea L."/>
            <person name="Spieth J."/>
            <person name="Wilson R.K."/>
        </authorList>
    </citation>
    <scope>NUCLEOTIDE SEQUENCE [LARGE SCALE GENOMIC DNA]</scope>
    <source>
        <strain>ATCC 9150 / SARB42</strain>
    </source>
</reference>
<dbReference type="EC" id="1.6.5.2" evidence="2"/>
<dbReference type="EMBL" id="CP000026">
    <property type="protein sequence ID" value="AAV77652.1"/>
    <property type="molecule type" value="Genomic_DNA"/>
</dbReference>
<dbReference type="SMR" id="Q5PG91"/>
<dbReference type="KEGG" id="spt:SPA1731"/>
<dbReference type="HOGENOM" id="CLU_051402_0_2_6"/>
<dbReference type="Proteomes" id="UP000008185">
    <property type="component" value="Chromosome"/>
</dbReference>
<dbReference type="GO" id="GO:0016020">
    <property type="term" value="C:membrane"/>
    <property type="evidence" value="ECO:0007669"/>
    <property type="project" value="TreeGrafter"/>
</dbReference>
<dbReference type="GO" id="GO:0050660">
    <property type="term" value="F:flavin adenine dinucleotide binding"/>
    <property type="evidence" value="ECO:0007669"/>
    <property type="project" value="UniProtKB-UniRule"/>
</dbReference>
<dbReference type="GO" id="GO:0010181">
    <property type="term" value="F:FMN binding"/>
    <property type="evidence" value="ECO:0007669"/>
    <property type="project" value="InterPro"/>
</dbReference>
<dbReference type="GO" id="GO:0051287">
    <property type="term" value="F:NAD binding"/>
    <property type="evidence" value="ECO:0007669"/>
    <property type="project" value="UniProtKB-UniRule"/>
</dbReference>
<dbReference type="GO" id="GO:0050136">
    <property type="term" value="F:NADH:ubiquinone reductase (non-electrogenic) activity"/>
    <property type="evidence" value="ECO:0007669"/>
    <property type="project" value="RHEA"/>
</dbReference>
<dbReference type="GO" id="GO:0050661">
    <property type="term" value="F:NADP binding"/>
    <property type="evidence" value="ECO:0007669"/>
    <property type="project" value="UniProtKB-UniRule"/>
</dbReference>
<dbReference type="GO" id="GO:0008753">
    <property type="term" value="F:NADPH dehydrogenase (quinone) activity"/>
    <property type="evidence" value="ECO:0007669"/>
    <property type="project" value="RHEA"/>
</dbReference>
<dbReference type="FunFam" id="3.40.50.360:FF:000004">
    <property type="entry name" value="NAD(P)H dehydrogenase (quinone)"/>
    <property type="match status" value="1"/>
</dbReference>
<dbReference type="Gene3D" id="3.40.50.360">
    <property type="match status" value="1"/>
</dbReference>
<dbReference type="HAMAP" id="MF_01017">
    <property type="entry name" value="NQOR"/>
    <property type="match status" value="1"/>
</dbReference>
<dbReference type="InterPro" id="IPR008254">
    <property type="entry name" value="Flavodoxin/NO_synth"/>
</dbReference>
<dbReference type="InterPro" id="IPR029039">
    <property type="entry name" value="Flavoprotein-like_sf"/>
</dbReference>
<dbReference type="InterPro" id="IPR010089">
    <property type="entry name" value="Flavoprotein_WrbA-like"/>
</dbReference>
<dbReference type="InterPro" id="IPR005025">
    <property type="entry name" value="FMN_Rdtase-like_dom"/>
</dbReference>
<dbReference type="InterPro" id="IPR037513">
    <property type="entry name" value="NQO"/>
</dbReference>
<dbReference type="NCBIfam" id="TIGR01755">
    <property type="entry name" value="flav_wrbA"/>
    <property type="match status" value="1"/>
</dbReference>
<dbReference type="NCBIfam" id="NF002999">
    <property type="entry name" value="PRK03767.1"/>
    <property type="match status" value="1"/>
</dbReference>
<dbReference type="PANTHER" id="PTHR30546">
    <property type="entry name" value="FLAVODOXIN-RELATED PROTEIN WRBA-RELATED"/>
    <property type="match status" value="1"/>
</dbReference>
<dbReference type="PANTHER" id="PTHR30546:SF23">
    <property type="entry name" value="FLAVOPROTEIN-LIKE PROTEIN YCP4-RELATED"/>
    <property type="match status" value="1"/>
</dbReference>
<dbReference type="Pfam" id="PF03358">
    <property type="entry name" value="FMN_red"/>
    <property type="match status" value="1"/>
</dbReference>
<dbReference type="SUPFAM" id="SSF52218">
    <property type="entry name" value="Flavoproteins"/>
    <property type="match status" value="1"/>
</dbReference>
<dbReference type="PROSITE" id="PS50902">
    <property type="entry name" value="FLAVODOXIN_LIKE"/>
    <property type="match status" value="1"/>
</dbReference>
<evidence type="ECO:0000250" key="1"/>
<evidence type="ECO:0000255" key="2">
    <source>
        <dbReference type="HAMAP-Rule" id="MF_01017"/>
    </source>
</evidence>
<comment type="catalytic activity">
    <reaction evidence="2">
        <text>a quinone + NADH + H(+) = a quinol + NAD(+)</text>
        <dbReference type="Rhea" id="RHEA:46160"/>
        <dbReference type="ChEBI" id="CHEBI:15378"/>
        <dbReference type="ChEBI" id="CHEBI:24646"/>
        <dbReference type="ChEBI" id="CHEBI:57540"/>
        <dbReference type="ChEBI" id="CHEBI:57945"/>
        <dbReference type="ChEBI" id="CHEBI:132124"/>
        <dbReference type="EC" id="1.6.5.2"/>
    </reaction>
</comment>
<comment type="catalytic activity">
    <reaction evidence="2">
        <text>a quinone + NADPH + H(+) = a quinol + NADP(+)</text>
        <dbReference type="Rhea" id="RHEA:46164"/>
        <dbReference type="ChEBI" id="CHEBI:15378"/>
        <dbReference type="ChEBI" id="CHEBI:24646"/>
        <dbReference type="ChEBI" id="CHEBI:57783"/>
        <dbReference type="ChEBI" id="CHEBI:58349"/>
        <dbReference type="ChEBI" id="CHEBI:132124"/>
        <dbReference type="EC" id="1.6.5.2"/>
    </reaction>
</comment>
<comment type="cofactor">
    <cofactor evidence="2">
        <name>FMN</name>
        <dbReference type="ChEBI" id="CHEBI:58210"/>
    </cofactor>
    <text evidence="2">Binds 1 FMN per monomer.</text>
</comment>
<comment type="similarity">
    <text evidence="2">Belongs to the WrbA family.</text>
</comment>
<gene>
    <name type="ordered locus">SPA1731</name>
</gene>
<accession>Q5PG91</accession>
<organism>
    <name type="scientific">Salmonella paratyphi A (strain ATCC 9150 / SARB42)</name>
    <dbReference type="NCBI Taxonomy" id="295319"/>
    <lineage>
        <taxon>Bacteria</taxon>
        <taxon>Pseudomonadati</taxon>
        <taxon>Pseudomonadota</taxon>
        <taxon>Gammaproteobacteria</taxon>
        <taxon>Enterobacterales</taxon>
        <taxon>Enterobacteriaceae</taxon>
        <taxon>Salmonella</taxon>
    </lineage>
</organism>
<sequence length="198" mass="20862">MAKILVLYYSMYGHIETMAHAVAEGAKKVDGAEVIIKRVPETMPPEIFAKAGGKTQNAPVATPQELADYDAIIFGTPTRFGNMPGQMRTFLDQTGGLWASGALYGKLGSVFSSTGTGGGQEQTITSTWTTLAHHGMVIVPIGYAAQELFDVSQVRGGTPYGATTIAGGDGSRQPSQEELSIARYQGEYVAGLAVKLNG</sequence>